<comment type="function">
    <text evidence="1">Cleaves peptides in various proteins in a process that requires ATP hydrolysis. Has a chymotrypsin-like activity. Plays a major role in the degradation of misfolded proteins.</text>
</comment>
<comment type="catalytic activity">
    <reaction evidence="1">
        <text>Hydrolysis of proteins to small peptides in the presence of ATP and magnesium. alpha-casein is the usual test substrate. In the absence of ATP, only oligopeptides shorter than five residues are hydrolyzed (such as succinyl-Leu-Tyr-|-NHMec, and Leu-Tyr-Leu-|-Tyr-Trp, in which cleavage of the -Tyr-|-Leu- and -Tyr-|-Trp bonds also occurs).</text>
        <dbReference type="EC" id="3.4.21.92"/>
    </reaction>
</comment>
<comment type="subunit">
    <text>Component of the chloroplastic Clp protease core complex.</text>
</comment>
<comment type="subcellular location">
    <subcellularLocation>
        <location evidence="1">Plastid</location>
        <location evidence="1">Chloroplast stroma</location>
    </subcellularLocation>
</comment>
<comment type="similarity">
    <text evidence="1">Belongs to the peptidase S14 family.</text>
</comment>
<accession>Q5QA83</accession>
<evidence type="ECO:0000255" key="1">
    <source>
        <dbReference type="HAMAP-Rule" id="MF_00444"/>
    </source>
</evidence>
<geneLocation type="chloroplast"/>
<reference key="1">
    <citation type="journal article" date="2004" name="BMC Evol. Biol.">
        <title>Long branch attraction, taxon sampling, and the earliest angiosperms: Amborella or monocots?</title>
        <authorList>
            <person name="Stefanovic S."/>
            <person name="Rice D.W."/>
            <person name="Palmer J.D."/>
        </authorList>
    </citation>
    <scope>NUCLEOTIDE SEQUENCE [GENOMIC DNA]</scope>
</reference>
<organism>
    <name type="scientific">Acorus gramineus</name>
    <name type="common">Dwarf sweet flag</name>
    <dbReference type="NCBI Taxonomy" id="55184"/>
    <lineage>
        <taxon>Eukaryota</taxon>
        <taxon>Viridiplantae</taxon>
        <taxon>Streptophyta</taxon>
        <taxon>Embryophyta</taxon>
        <taxon>Tracheophyta</taxon>
        <taxon>Spermatophyta</taxon>
        <taxon>Magnoliopsida</taxon>
        <taxon>Liliopsida</taxon>
        <taxon>Acoraceae</taxon>
        <taxon>Acorus</taxon>
    </lineage>
</organism>
<gene>
    <name evidence="1" type="primary">clpP</name>
</gene>
<protein>
    <recommendedName>
        <fullName evidence="1">ATP-dependent Clp protease proteolytic subunit</fullName>
        <ecNumber evidence="1">3.4.21.92</ecNumber>
    </recommendedName>
    <alternativeName>
        <fullName evidence="1">Endopeptidase Clp</fullName>
    </alternativeName>
</protein>
<dbReference type="EC" id="3.4.21.92" evidence="1"/>
<dbReference type="EMBL" id="AY757812">
    <property type="protein sequence ID" value="AAV74350.1"/>
    <property type="molecule type" value="Genomic_DNA"/>
</dbReference>
<dbReference type="SMR" id="Q5QA83"/>
<dbReference type="GO" id="GO:0009570">
    <property type="term" value="C:chloroplast stroma"/>
    <property type="evidence" value="ECO:0007669"/>
    <property type="project" value="UniProtKB-SubCell"/>
</dbReference>
<dbReference type="GO" id="GO:0009368">
    <property type="term" value="C:endopeptidase Clp complex"/>
    <property type="evidence" value="ECO:0007669"/>
    <property type="project" value="TreeGrafter"/>
</dbReference>
<dbReference type="GO" id="GO:0004176">
    <property type="term" value="F:ATP-dependent peptidase activity"/>
    <property type="evidence" value="ECO:0007669"/>
    <property type="project" value="InterPro"/>
</dbReference>
<dbReference type="GO" id="GO:0051117">
    <property type="term" value="F:ATPase binding"/>
    <property type="evidence" value="ECO:0007669"/>
    <property type="project" value="TreeGrafter"/>
</dbReference>
<dbReference type="GO" id="GO:0004252">
    <property type="term" value="F:serine-type endopeptidase activity"/>
    <property type="evidence" value="ECO:0007669"/>
    <property type="project" value="UniProtKB-UniRule"/>
</dbReference>
<dbReference type="GO" id="GO:0006515">
    <property type="term" value="P:protein quality control for misfolded or incompletely synthesized proteins"/>
    <property type="evidence" value="ECO:0007669"/>
    <property type="project" value="TreeGrafter"/>
</dbReference>
<dbReference type="CDD" id="cd07017">
    <property type="entry name" value="S14_ClpP_2"/>
    <property type="match status" value="1"/>
</dbReference>
<dbReference type="FunFam" id="3.90.226.10:FF:000006">
    <property type="entry name" value="ATP-dependent Clp protease proteolytic subunit"/>
    <property type="match status" value="1"/>
</dbReference>
<dbReference type="Gene3D" id="3.90.226.10">
    <property type="entry name" value="2-enoyl-CoA Hydratase, Chain A, domain 1"/>
    <property type="match status" value="1"/>
</dbReference>
<dbReference type="HAMAP" id="MF_00444">
    <property type="entry name" value="ClpP"/>
    <property type="match status" value="1"/>
</dbReference>
<dbReference type="InterPro" id="IPR001907">
    <property type="entry name" value="ClpP"/>
</dbReference>
<dbReference type="InterPro" id="IPR029045">
    <property type="entry name" value="ClpP/crotonase-like_dom_sf"/>
</dbReference>
<dbReference type="InterPro" id="IPR023562">
    <property type="entry name" value="ClpP/TepA"/>
</dbReference>
<dbReference type="InterPro" id="IPR033135">
    <property type="entry name" value="ClpP_His_AS"/>
</dbReference>
<dbReference type="InterPro" id="IPR018215">
    <property type="entry name" value="ClpP_Ser_AS"/>
</dbReference>
<dbReference type="PANTHER" id="PTHR10381">
    <property type="entry name" value="ATP-DEPENDENT CLP PROTEASE PROTEOLYTIC SUBUNIT"/>
    <property type="match status" value="1"/>
</dbReference>
<dbReference type="PANTHER" id="PTHR10381:SF15">
    <property type="entry name" value="CHLOROPLASTIC ATP-DEPENDENT CLP PROTEASE PROTEOLYTIC SUBUNIT 1"/>
    <property type="match status" value="1"/>
</dbReference>
<dbReference type="Pfam" id="PF00574">
    <property type="entry name" value="CLP_protease"/>
    <property type="match status" value="1"/>
</dbReference>
<dbReference type="PRINTS" id="PR00127">
    <property type="entry name" value="CLPPROTEASEP"/>
</dbReference>
<dbReference type="SUPFAM" id="SSF52096">
    <property type="entry name" value="ClpP/crotonase"/>
    <property type="match status" value="1"/>
</dbReference>
<dbReference type="PROSITE" id="PS00382">
    <property type="entry name" value="CLP_PROTEASE_HIS"/>
    <property type="match status" value="1"/>
</dbReference>
<dbReference type="PROSITE" id="PS00381">
    <property type="entry name" value="CLP_PROTEASE_SER"/>
    <property type="match status" value="1"/>
</dbReference>
<proteinExistence type="inferred from homology"/>
<keyword id="KW-0150">Chloroplast</keyword>
<keyword id="KW-0378">Hydrolase</keyword>
<keyword id="KW-0934">Plastid</keyword>
<keyword id="KW-0645">Protease</keyword>
<keyword id="KW-0720">Serine protease</keyword>
<name>CLPP_ACOGR</name>
<feature type="chain" id="PRO_0000179730" description="ATP-dependent Clp protease proteolytic subunit">
    <location>
        <begin position="1"/>
        <end position="202"/>
    </location>
</feature>
<feature type="active site" description="Nucleophile" evidence="1">
    <location>
        <position position="101"/>
    </location>
</feature>
<feature type="active site" evidence="1">
    <location>
        <position position="126"/>
    </location>
</feature>
<sequence length="202" mass="22515">MPIGVPKVLFGSPGEEDAAWVDIYNRLHRERLLFLGQELDSEISNQLVGLMVYLSIEDKTRDFFLFINSPGGWVIPGIGLYDTMQFVPPDVHTICMGLAASMGSFILVGGEITKRLAFPHARVMIHQPASSFYEAQAGEFVLEAEELLKLRETLTRVYVQRTGKPLWVVSEDMERDVFLSATEAQAHGIVDLVGDENMGDLV</sequence>